<feature type="chain" id="PRO_0000224620" description="Valine--tRNA ligase">
    <location>
        <begin position="1"/>
        <end position="855"/>
    </location>
</feature>
<feature type="short sequence motif" description="'HIGH' region">
    <location>
        <begin position="42"/>
        <end position="52"/>
    </location>
</feature>
<feature type="short sequence motif" description="'KMSKS' region">
    <location>
        <begin position="574"/>
        <end position="578"/>
    </location>
</feature>
<feature type="binding site" evidence="1">
    <location>
        <position position="577"/>
    </location>
    <ligand>
        <name>ATP</name>
        <dbReference type="ChEBI" id="CHEBI:30616"/>
    </ligand>
</feature>
<name>SYV_WOLTR</name>
<protein>
    <recommendedName>
        <fullName evidence="1">Valine--tRNA ligase</fullName>
        <ecNumber evidence="1">6.1.1.9</ecNumber>
    </recommendedName>
    <alternativeName>
        <fullName evidence="1">Valyl-tRNA synthetase</fullName>
        <shortName evidence="1">ValRS</shortName>
    </alternativeName>
</protein>
<dbReference type="EC" id="6.1.1.9" evidence="1"/>
<dbReference type="EMBL" id="AE017321">
    <property type="protein sequence ID" value="AAW71374.1"/>
    <property type="molecule type" value="Genomic_DNA"/>
</dbReference>
<dbReference type="RefSeq" id="WP_011256983.1">
    <property type="nucleotide sequence ID" value="NC_006833.1"/>
</dbReference>
<dbReference type="SMR" id="Q5GRK0"/>
<dbReference type="STRING" id="292805.Wbm0786"/>
<dbReference type="KEGG" id="wbm:Wbm0786"/>
<dbReference type="eggNOG" id="COG0525">
    <property type="taxonomic scope" value="Bacteria"/>
</dbReference>
<dbReference type="HOGENOM" id="CLU_001493_0_2_5"/>
<dbReference type="Proteomes" id="UP000000534">
    <property type="component" value="Chromosome"/>
</dbReference>
<dbReference type="GO" id="GO:0005829">
    <property type="term" value="C:cytosol"/>
    <property type="evidence" value="ECO:0007669"/>
    <property type="project" value="TreeGrafter"/>
</dbReference>
<dbReference type="GO" id="GO:0002161">
    <property type="term" value="F:aminoacyl-tRNA deacylase activity"/>
    <property type="evidence" value="ECO:0007669"/>
    <property type="project" value="InterPro"/>
</dbReference>
<dbReference type="GO" id="GO:0005524">
    <property type="term" value="F:ATP binding"/>
    <property type="evidence" value="ECO:0007669"/>
    <property type="project" value="UniProtKB-UniRule"/>
</dbReference>
<dbReference type="GO" id="GO:0004832">
    <property type="term" value="F:valine-tRNA ligase activity"/>
    <property type="evidence" value="ECO:0007669"/>
    <property type="project" value="UniProtKB-UniRule"/>
</dbReference>
<dbReference type="GO" id="GO:0006438">
    <property type="term" value="P:valyl-tRNA aminoacylation"/>
    <property type="evidence" value="ECO:0007669"/>
    <property type="project" value="UniProtKB-UniRule"/>
</dbReference>
<dbReference type="CDD" id="cd07962">
    <property type="entry name" value="Anticodon_Ia_Val"/>
    <property type="match status" value="1"/>
</dbReference>
<dbReference type="FunFam" id="3.40.50.620:FF:000192">
    <property type="entry name" value="Valine--tRNA ligase"/>
    <property type="match status" value="1"/>
</dbReference>
<dbReference type="Gene3D" id="3.40.50.620">
    <property type="entry name" value="HUPs"/>
    <property type="match status" value="2"/>
</dbReference>
<dbReference type="Gene3D" id="1.10.730.10">
    <property type="entry name" value="Isoleucyl-tRNA Synthetase, Domain 1"/>
    <property type="match status" value="1"/>
</dbReference>
<dbReference type="HAMAP" id="MF_02005">
    <property type="entry name" value="Val_tRNA_synth_type2"/>
    <property type="match status" value="1"/>
</dbReference>
<dbReference type="InterPro" id="IPR001412">
    <property type="entry name" value="aa-tRNA-synth_I_CS"/>
</dbReference>
<dbReference type="InterPro" id="IPR002300">
    <property type="entry name" value="aa-tRNA-synth_Ia"/>
</dbReference>
<dbReference type="InterPro" id="IPR033705">
    <property type="entry name" value="Anticodon_Ia_Val"/>
</dbReference>
<dbReference type="InterPro" id="IPR013155">
    <property type="entry name" value="M/V/L/I-tRNA-synth_anticd-bd"/>
</dbReference>
<dbReference type="InterPro" id="IPR014729">
    <property type="entry name" value="Rossmann-like_a/b/a_fold"/>
</dbReference>
<dbReference type="InterPro" id="IPR009080">
    <property type="entry name" value="tRNAsynth_Ia_anticodon-bd"/>
</dbReference>
<dbReference type="InterPro" id="IPR009008">
    <property type="entry name" value="Val/Leu/Ile-tRNA-synth_edit"/>
</dbReference>
<dbReference type="InterPro" id="IPR022874">
    <property type="entry name" value="Valine-tRNA_ligase_type_2"/>
</dbReference>
<dbReference type="InterPro" id="IPR002303">
    <property type="entry name" value="Valyl-tRNA_ligase"/>
</dbReference>
<dbReference type="NCBIfam" id="NF009687">
    <property type="entry name" value="PRK13208.1"/>
    <property type="match status" value="1"/>
</dbReference>
<dbReference type="NCBIfam" id="TIGR00422">
    <property type="entry name" value="valS"/>
    <property type="match status" value="1"/>
</dbReference>
<dbReference type="PANTHER" id="PTHR11946:SF93">
    <property type="entry name" value="VALINE--TRNA LIGASE, CHLOROPLASTIC_MITOCHONDRIAL 2"/>
    <property type="match status" value="1"/>
</dbReference>
<dbReference type="PANTHER" id="PTHR11946">
    <property type="entry name" value="VALYL-TRNA SYNTHETASES"/>
    <property type="match status" value="1"/>
</dbReference>
<dbReference type="Pfam" id="PF08264">
    <property type="entry name" value="Anticodon_1"/>
    <property type="match status" value="1"/>
</dbReference>
<dbReference type="Pfam" id="PF00133">
    <property type="entry name" value="tRNA-synt_1"/>
    <property type="match status" value="1"/>
</dbReference>
<dbReference type="PRINTS" id="PR00986">
    <property type="entry name" value="TRNASYNTHVAL"/>
</dbReference>
<dbReference type="SUPFAM" id="SSF47323">
    <property type="entry name" value="Anticodon-binding domain of a subclass of class I aminoacyl-tRNA synthetases"/>
    <property type="match status" value="1"/>
</dbReference>
<dbReference type="SUPFAM" id="SSF52374">
    <property type="entry name" value="Nucleotidylyl transferase"/>
    <property type="match status" value="1"/>
</dbReference>
<dbReference type="SUPFAM" id="SSF50677">
    <property type="entry name" value="ValRS/IleRS/LeuRS editing domain"/>
    <property type="match status" value="1"/>
</dbReference>
<dbReference type="PROSITE" id="PS00178">
    <property type="entry name" value="AA_TRNA_LIGASE_I"/>
    <property type="match status" value="1"/>
</dbReference>
<comment type="function">
    <text evidence="1">Catalyzes the attachment of valine to tRNA(Val). As ValRS can inadvertently accommodate and process structurally similar amino acids such as threonine, to avoid such errors, it has a 'posttransfer' editing activity that hydrolyzes mischarged Thr-tRNA(Val) in a tRNA-dependent manner.</text>
</comment>
<comment type="catalytic activity">
    <reaction evidence="1">
        <text>tRNA(Val) + L-valine + ATP = L-valyl-tRNA(Val) + AMP + diphosphate</text>
        <dbReference type="Rhea" id="RHEA:10704"/>
        <dbReference type="Rhea" id="RHEA-COMP:9672"/>
        <dbReference type="Rhea" id="RHEA-COMP:9708"/>
        <dbReference type="ChEBI" id="CHEBI:30616"/>
        <dbReference type="ChEBI" id="CHEBI:33019"/>
        <dbReference type="ChEBI" id="CHEBI:57762"/>
        <dbReference type="ChEBI" id="CHEBI:78442"/>
        <dbReference type="ChEBI" id="CHEBI:78537"/>
        <dbReference type="ChEBI" id="CHEBI:456215"/>
        <dbReference type="EC" id="6.1.1.9"/>
    </reaction>
</comment>
<comment type="subunit">
    <text evidence="1">Monomer.</text>
</comment>
<comment type="subcellular location">
    <subcellularLocation>
        <location evidence="1">Cytoplasm</location>
    </subcellularLocation>
</comment>
<comment type="domain">
    <text evidence="1">ValRS has two distinct active sites: one for aminoacylation and one for editing. The misactivated threonine is translocated from the active site to the editing site.</text>
</comment>
<comment type="similarity">
    <text evidence="1">Belongs to the class-I aminoacyl-tRNA synthetase family. ValS type 2 subfamily.</text>
</comment>
<gene>
    <name evidence="1" type="primary">valS</name>
    <name type="ordered locus">Wbm0786</name>
</gene>
<sequence>MLKEKYSFKEVENKYNILWEDSRVYKWDGKKENTFTIDTPPPTISGKLHIGHIFSYCHTDFIARFQRMLGKDIFYPIGFDDNGLPTERLVEQTYKTRAREVGREKFIEMCHEVIEKSKQEFKELLRSVGISYDWSLEYHTISKETVTLSQMSFIDLYNKGYAYRKMQPILWDPVDKTAIAQAEIEDKVCESSLNTITFSTEENEQIDIATTRPELFLACVAVFCHPEDARYAHLIGKTSVVPIIGVKVPIIADGRVKIDKGTGLVMCCTFGDELDIYWQQKHNLPMKIIIDQDGKINLDSMYDNNRSQYQGIGMTGERSTGVIKEGAISPHYDVIPVRNTRIYDEINGLKVKEARKKIIKILTERGLLTGSTNISHSVKCAERSGVSLEILPTYQWFIKTLDQKAQVLDKVKECNWYPSTMRKRMEVWIEGLNWDWCISRQRYFGVPFPVWYSRRKGEEGKVILAEVEDLPVDPLKDLPKGYSKEEVVPDQDVMDTWATSAITPQLSALAVNSEFSLPDHRYNTIFPADLRSQSHEIIRTWAFYTILKAYYHANSLPWKNIMVSGWCLADDKKKMSKSKGNIITPKSILDTYGADVVRYWTANSRLGVDTVYSENILKIGKRLVTKLWNASKFVSIFMERYQAVSINSVSETMDQWILSKLYKVIEKATNNLLQFEYCEALGAVEGFFWKDFCDNYLELAKKRAYGDKVSSKANLSAKQSLTYVLNTILRLLAPFLPYITEQIYHQLYSDNSVHNRGNWPNKEELIYDKHSEEMGDKFMQILNLVRKIKADNNVSVKHLIKKLMIKANVKEDKLNQSAQNDLQTVCNAEMIEWSENAQAGLITENGKFIVSIDLY</sequence>
<accession>Q5GRK0</accession>
<keyword id="KW-0030">Aminoacyl-tRNA synthetase</keyword>
<keyword id="KW-0067">ATP-binding</keyword>
<keyword id="KW-0963">Cytoplasm</keyword>
<keyword id="KW-0436">Ligase</keyword>
<keyword id="KW-0547">Nucleotide-binding</keyword>
<keyword id="KW-0648">Protein biosynthesis</keyword>
<keyword id="KW-1185">Reference proteome</keyword>
<evidence type="ECO:0000255" key="1">
    <source>
        <dbReference type="HAMAP-Rule" id="MF_02005"/>
    </source>
</evidence>
<proteinExistence type="inferred from homology"/>
<reference key="1">
    <citation type="journal article" date="2005" name="PLoS Biol.">
        <title>The Wolbachia genome of Brugia malayi: endosymbiont evolution within a human pathogenic nematode.</title>
        <authorList>
            <person name="Foster J."/>
            <person name="Ganatra M."/>
            <person name="Kamal I."/>
            <person name="Ware J."/>
            <person name="Makarova K."/>
            <person name="Ivanova N."/>
            <person name="Bhattacharyya A."/>
            <person name="Kapatral V."/>
            <person name="Kumar S."/>
            <person name="Posfai J."/>
            <person name="Vincze T."/>
            <person name="Ingram J."/>
            <person name="Moran L."/>
            <person name="Lapidus A."/>
            <person name="Omelchenko M."/>
            <person name="Kyrpides N."/>
            <person name="Ghedin E."/>
            <person name="Wang S."/>
            <person name="Goltsman E."/>
            <person name="Joukov V."/>
            <person name="Ostrovskaya O."/>
            <person name="Tsukerman K."/>
            <person name="Mazur M."/>
            <person name="Comb D."/>
            <person name="Koonin E."/>
            <person name="Slatko B."/>
        </authorList>
    </citation>
    <scope>NUCLEOTIDE SEQUENCE [LARGE SCALE GENOMIC DNA]</scope>
    <source>
        <strain>TRS</strain>
    </source>
</reference>
<organism>
    <name type="scientific">Wolbachia sp. subsp. Brugia malayi (strain TRS)</name>
    <dbReference type="NCBI Taxonomy" id="292805"/>
    <lineage>
        <taxon>Bacteria</taxon>
        <taxon>Pseudomonadati</taxon>
        <taxon>Pseudomonadota</taxon>
        <taxon>Alphaproteobacteria</taxon>
        <taxon>Rickettsiales</taxon>
        <taxon>Anaplasmataceae</taxon>
        <taxon>Wolbachieae</taxon>
        <taxon>Wolbachia</taxon>
    </lineage>
</organism>